<sequence>MEDLQLVLFVLGAIAIVAVLVHGFWSIRRQQPKSLKDSPMGNFYKKQAERGEGAPKRVDADGFDADGIGAVRVRKANEAHTPEAPAFNPYLKQEAKTQPQPVEPVQVEPKPLFEQEPSMAQPDFSLQSPTAKEQHRGPKASRQEPVLQGHSANLAQAHVGQSHAAMVAQKVAEEQRAQVQMPTQTALFDDEEPYEEEQSQAVEQADDDLGEPRDVLVLHVVAKEGQQLNGAELLPCFLTLNFKYGDMNIFHRHVDNAGNGKVLFSIANMVKPGIFDPDNMEQFSTQGVVFFMTLPCYGDALMNFSIMLNSARQLADDIDAVVLDGQRQPWGEFTKQDYLHRIRANA</sequence>
<name>ZIPA_SHESR</name>
<organism>
    <name type="scientific">Shewanella sp. (strain MR-7)</name>
    <dbReference type="NCBI Taxonomy" id="60481"/>
    <lineage>
        <taxon>Bacteria</taxon>
        <taxon>Pseudomonadati</taxon>
        <taxon>Pseudomonadota</taxon>
        <taxon>Gammaproteobacteria</taxon>
        <taxon>Alteromonadales</taxon>
        <taxon>Shewanellaceae</taxon>
        <taxon>Shewanella</taxon>
    </lineage>
</organism>
<comment type="function">
    <text evidence="1">Essential cell division protein that stabilizes the FtsZ protofilaments by cross-linking them and that serves as a cytoplasmic membrane anchor for the Z ring. Also required for the recruitment to the septal ring of downstream cell division proteins.</text>
</comment>
<comment type="subunit">
    <text evidence="1">Interacts with FtsZ via their C-terminal domains.</text>
</comment>
<comment type="subcellular location">
    <subcellularLocation>
        <location evidence="1">Cell inner membrane</location>
        <topology evidence="1">Single-pass type I membrane protein</topology>
    </subcellularLocation>
    <text evidence="1">Localizes to the Z ring in an FtsZ-dependent manner.</text>
</comment>
<comment type="similarity">
    <text evidence="1">Belongs to the ZipA family.</text>
</comment>
<accession>Q0HWD3</accession>
<gene>
    <name evidence="1" type="primary">zipA</name>
    <name type="ordered locus">Shewmr7_1574</name>
</gene>
<dbReference type="EMBL" id="CP000444">
    <property type="protein sequence ID" value="ABI42572.1"/>
    <property type="molecule type" value="Genomic_DNA"/>
</dbReference>
<dbReference type="SMR" id="Q0HWD3"/>
<dbReference type="KEGG" id="shm:Shewmr7_1574"/>
<dbReference type="HOGENOM" id="CLU_030174_1_0_6"/>
<dbReference type="GO" id="GO:0032153">
    <property type="term" value="C:cell division site"/>
    <property type="evidence" value="ECO:0007669"/>
    <property type="project" value="UniProtKB-UniRule"/>
</dbReference>
<dbReference type="GO" id="GO:0005886">
    <property type="term" value="C:plasma membrane"/>
    <property type="evidence" value="ECO:0007669"/>
    <property type="project" value="UniProtKB-SubCell"/>
</dbReference>
<dbReference type="GO" id="GO:0000917">
    <property type="term" value="P:division septum assembly"/>
    <property type="evidence" value="ECO:0007669"/>
    <property type="project" value="TreeGrafter"/>
</dbReference>
<dbReference type="GO" id="GO:0043093">
    <property type="term" value="P:FtsZ-dependent cytokinesis"/>
    <property type="evidence" value="ECO:0007669"/>
    <property type="project" value="UniProtKB-UniRule"/>
</dbReference>
<dbReference type="FunFam" id="3.30.1400.10:FF:000001">
    <property type="entry name" value="Cell division protein ZipA"/>
    <property type="match status" value="1"/>
</dbReference>
<dbReference type="Gene3D" id="3.30.1400.10">
    <property type="entry name" value="ZipA, C-terminal FtsZ-binding domain"/>
    <property type="match status" value="1"/>
</dbReference>
<dbReference type="HAMAP" id="MF_00509">
    <property type="entry name" value="ZipA"/>
    <property type="match status" value="1"/>
</dbReference>
<dbReference type="InterPro" id="IPR011919">
    <property type="entry name" value="Cell_div_ZipA"/>
</dbReference>
<dbReference type="InterPro" id="IPR007449">
    <property type="entry name" value="ZipA_FtsZ-bd_C"/>
</dbReference>
<dbReference type="InterPro" id="IPR036765">
    <property type="entry name" value="ZipA_FtsZ-bd_C_sf"/>
</dbReference>
<dbReference type="NCBIfam" id="TIGR02205">
    <property type="entry name" value="septum_zipA"/>
    <property type="match status" value="1"/>
</dbReference>
<dbReference type="PANTHER" id="PTHR38685">
    <property type="entry name" value="CELL DIVISION PROTEIN ZIPA"/>
    <property type="match status" value="1"/>
</dbReference>
<dbReference type="PANTHER" id="PTHR38685:SF1">
    <property type="entry name" value="CELL DIVISION PROTEIN ZIPA"/>
    <property type="match status" value="1"/>
</dbReference>
<dbReference type="Pfam" id="PF04354">
    <property type="entry name" value="ZipA_C"/>
    <property type="match status" value="1"/>
</dbReference>
<dbReference type="SMART" id="SM00771">
    <property type="entry name" value="ZipA_C"/>
    <property type="match status" value="1"/>
</dbReference>
<dbReference type="SUPFAM" id="SSF64383">
    <property type="entry name" value="Cell-division protein ZipA, C-terminal domain"/>
    <property type="match status" value="1"/>
</dbReference>
<evidence type="ECO:0000255" key="1">
    <source>
        <dbReference type="HAMAP-Rule" id="MF_00509"/>
    </source>
</evidence>
<evidence type="ECO:0000256" key="2">
    <source>
        <dbReference type="SAM" id="MobiDB-lite"/>
    </source>
</evidence>
<protein>
    <recommendedName>
        <fullName evidence="1">Cell division protein ZipA</fullName>
    </recommendedName>
</protein>
<reference key="1">
    <citation type="submission" date="2006-08" db="EMBL/GenBank/DDBJ databases">
        <title>Complete sequence of chromosome 1 of Shewanella sp. MR-7.</title>
        <authorList>
            <person name="Copeland A."/>
            <person name="Lucas S."/>
            <person name="Lapidus A."/>
            <person name="Barry K."/>
            <person name="Detter J.C."/>
            <person name="Glavina del Rio T."/>
            <person name="Hammon N."/>
            <person name="Israni S."/>
            <person name="Dalin E."/>
            <person name="Tice H."/>
            <person name="Pitluck S."/>
            <person name="Kiss H."/>
            <person name="Brettin T."/>
            <person name="Bruce D."/>
            <person name="Han C."/>
            <person name="Tapia R."/>
            <person name="Gilna P."/>
            <person name="Schmutz J."/>
            <person name="Larimer F."/>
            <person name="Land M."/>
            <person name="Hauser L."/>
            <person name="Kyrpides N."/>
            <person name="Mikhailova N."/>
            <person name="Nealson K."/>
            <person name="Konstantinidis K."/>
            <person name="Klappenbach J."/>
            <person name="Tiedje J."/>
            <person name="Richardson P."/>
        </authorList>
    </citation>
    <scope>NUCLEOTIDE SEQUENCE [LARGE SCALE GENOMIC DNA]</scope>
    <source>
        <strain>MR-7</strain>
    </source>
</reference>
<feature type="chain" id="PRO_1000015160" description="Cell division protein ZipA">
    <location>
        <begin position="1"/>
        <end position="346"/>
    </location>
</feature>
<feature type="topological domain" description="Periplasmic" evidence="1">
    <location>
        <begin position="1"/>
        <end position="6"/>
    </location>
</feature>
<feature type="transmembrane region" description="Helical" evidence="1">
    <location>
        <begin position="7"/>
        <end position="27"/>
    </location>
</feature>
<feature type="topological domain" description="Cytoplasmic" evidence="1">
    <location>
        <begin position="28"/>
        <end position="346"/>
    </location>
</feature>
<feature type="region of interest" description="Disordered" evidence="2">
    <location>
        <begin position="76"/>
        <end position="103"/>
    </location>
</feature>
<feature type="region of interest" description="Disordered" evidence="2">
    <location>
        <begin position="121"/>
        <end position="145"/>
    </location>
</feature>
<proteinExistence type="inferred from homology"/>
<keyword id="KW-0131">Cell cycle</keyword>
<keyword id="KW-0132">Cell division</keyword>
<keyword id="KW-0997">Cell inner membrane</keyword>
<keyword id="KW-1003">Cell membrane</keyword>
<keyword id="KW-0472">Membrane</keyword>
<keyword id="KW-0812">Transmembrane</keyword>
<keyword id="KW-1133">Transmembrane helix</keyword>